<sequence length="145" mass="16674">MAERPEDLNLPNAVITRIIKEALPDGVNISKEARSAISRAASVFVLYATSCANNFAMKGKRKTLNASDVLSAMEEMEFQRFVTPLKEALEAYRREQKGKKEASEQKKKDKDKKDCEEQDKSREEEDEDEERLDEEEQNEEEEVDN</sequence>
<keyword id="KW-0007">Acetylation</keyword>
<keyword id="KW-0175">Coiled coil</keyword>
<keyword id="KW-0238">DNA-binding</keyword>
<keyword id="KW-0539">Nucleus</keyword>
<keyword id="KW-0597">Phosphoprotein</keyword>
<keyword id="KW-1185">Reference proteome</keyword>
<evidence type="ECO:0000250" key="1">
    <source>
        <dbReference type="UniProtKB" id="Q04603"/>
    </source>
</evidence>
<evidence type="ECO:0000250" key="2">
    <source>
        <dbReference type="UniProtKB" id="Q9NRF9"/>
    </source>
</evidence>
<evidence type="ECO:0000255" key="3"/>
<evidence type="ECO:0000256" key="4">
    <source>
        <dbReference type="SAM" id="MobiDB-lite"/>
    </source>
</evidence>
<evidence type="ECO:0000305" key="5"/>
<evidence type="ECO:0007744" key="6">
    <source>
    </source>
</evidence>
<reference key="1">
    <citation type="journal article" date="2004" name="Genome Res.">
        <title>The status, quality, and expansion of the NIH full-length cDNA project: the Mammalian Gene Collection (MGC).</title>
        <authorList>
            <consortium name="The MGC Project Team"/>
        </authorList>
    </citation>
    <scope>NUCLEOTIDE SEQUENCE [LARGE SCALE MRNA]</scope>
    <source>
        <tissue>Kidney</tissue>
    </source>
</reference>
<reference key="2">
    <citation type="journal article" date="2012" name="Nat. Commun.">
        <title>Quantitative maps of protein phosphorylation sites across 14 different rat organs and tissues.</title>
        <authorList>
            <person name="Lundby A."/>
            <person name="Secher A."/>
            <person name="Lage K."/>
            <person name="Nordsborg N.B."/>
            <person name="Dmytriyev A."/>
            <person name="Lundby C."/>
            <person name="Olsen J.V."/>
        </authorList>
    </citation>
    <scope>PHOSPHORYLATION [LARGE SCALE ANALYSIS] AT SER-121</scope>
    <scope>IDENTIFICATION BY MASS SPECTROMETRY [LARGE SCALE ANALYSIS]</scope>
</reference>
<protein>
    <recommendedName>
        <fullName>DNA polymerase epsilon subunit 3</fullName>
    </recommendedName>
    <alternativeName>
        <fullName>DNA polymerase II subunit 3</fullName>
    </alternativeName>
    <alternativeName>
        <fullName>DNA polymerase epsilon subunit p17</fullName>
    </alternativeName>
</protein>
<dbReference type="EMBL" id="BC081988">
    <property type="protein sequence ID" value="AAH81988.1"/>
    <property type="molecule type" value="mRNA"/>
</dbReference>
<dbReference type="EMBL" id="BC083800">
    <property type="protein sequence ID" value="AAH83800.1"/>
    <property type="molecule type" value="mRNA"/>
</dbReference>
<dbReference type="RefSeq" id="NP_001007653.1">
    <property type="nucleotide sequence ID" value="NM_001007652.2"/>
</dbReference>
<dbReference type="RefSeq" id="XP_002726991.1">
    <property type="nucleotide sequence ID" value="XM_002726945.5"/>
</dbReference>
<dbReference type="RefSeq" id="XP_002729875.1">
    <property type="nucleotide sequence ID" value="XM_002729829.5"/>
</dbReference>
<dbReference type="SMR" id="Q642A5"/>
<dbReference type="FunCoup" id="Q642A5">
    <property type="interactions" value="1842"/>
</dbReference>
<dbReference type="STRING" id="10116.ENSRNOP00000006416"/>
<dbReference type="iPTMnet" id="Q642A5"/>
<dbReference type="PhosphoSitePlus" id="Q642A5"/>
<dbReference type="jPOST" id="Q642A5"/>
<dbReference type="PaxDb" id="10116-ENSRNOP00000006416"/>
<dbReference type="Ensembl" id="ENSRNOT00000006416.3">
    <property type="protein sequence ID" value="ENSRNOP00000006416.1"/>
    <property type="gene ID" value="ENSRNOG00000004843.3"/>
</dbReference>
<dbReference type="GeneID" id="298098"/>
<dbReference type="KEGG" id="rno:298098"/>
<dbReference type="UCSC" id="RGD:1359475">
    <property type="organism name" value="rat"/>
</dbReference>
<dbReference type="AGR" id="RGD:1359475"/>
<dbReference type="CTD" id="54107"/>
<dbReference type="RGD" id="1359475">
    <property type="gene designation" value="Pole3"/>
</dbReference>
<dbReference type="eggNOG" id="KOG0870">
    <property type="taxonomic scope" value="Eukaryota"/>
</dbReference>
<dbReference type="GeneTree" id="ENSGT00940000161417"/>
<dbReference type="HOGENOM" id="CLU_066247_7_2_1"/>
<dbReference type="InParanoid" id="Q642A5"/>
<dbReference type="OMA" id="KQNHRTI"/>
<dbReference type="OrthoDB" id="1707486at2759"/>
<dbReference type="PhylomeDB" id="Q642A5"/>
<dbReference type="TreeFam" id="TF103008"/>
<dbReference type="Reactome" id="R-RNO-110314">
    <property type="pathway name" value="Recognition of DNA damage by PCNA-containing replication complex"/>
</dbReference>
<dbReference type="Reactome" id="R-RNO-5651801">
    <property type="pathway name" value="PCNA-Dependent Long Patch Base Excision Repair"/>
</dbReference>
<dbReference type="Reactome" id="R-RNO-5656169">
    <property type="pathway name" value="Termination of translesion DNA synthesis"/>
</dbReference>
<dbReference type="Reactome" id="R-RNO-5685942">
    <property type="pathway name" value="HDR through Homologous Recombination (HRR)"/>
</dbReference>
<dbReference type="Reactome" id="R-RNO-5696397">
    <property type="pathway name" value="Gap-filling DNA repair synthesis and ligation in GG-NER"/>
</dbReference>
<dbReference type="Reactome" id="R-RNO-5696400">
    <property type="pathway name" value="Dual Incision in GG-NER"/>
</dbReference>
<dbReference type="Reactome" id="R-RNO-6782135">
    <property type="pathway name" value="Dual incision in TC-NER"/>
</dbReference>
<dbReference type="Reactome" id="R-RNO-6782210">
    <property type="pathway name" value="Gap-filling DNA repair synthesis and ligation in TC-NER"/>
</dbReference>
<dbReference type="Reactome" id="R-RNO-68952">
    <property type="pathway name" value="DNA replication initiation"/>
</dbReference>
<dbReference type="Reactome" id="R-RNO-68962">
    <property type="pathway name" value="Activation of the pre-replicative complex"/>
</dbReference>
<dbReference type="PRO" id="PR:Q642A5"/>
<dbReference type="Proteomes" id="UP000002494">
    <property type="component" value="Chromosome 7"/>
</dbReference>
<dbReference type="Bgee" id="ENSRNOG00000004843">
    <property type="expression patterns" value="Expressed in testis and 19 other cell types or tissues"/>
</dbReference>
<dbReference type="GO" id="GO:0140672">
    <property type="term" value="C:ATAC complex"/>
    <property type="evidence" value="ECO:0000266"/>
    <property type="project" value="RGD"/>
</dbReference>
<dbReference type="GO" id="GO:0008623">
    <property type="term" value="C:CHRAC"/>
    <property type="evidence" value="ECO:0000318"/>
    <property type="project" value="GO_Central"/>
</dbReference>
<dbReference type="GO" id="GO:0008622">
    <property type="term" value="C:epsilon DNA polymerase complex"/>
    <property type="evidence" value="ECO:0000250"/>
    <property type="project" value="UniProtKB"/>
</dbReference>
<dbReference type="GO" id="GO:0005721">
    <property type="term" value="C:pericentric heterochromatin"/>
    <property type="evidence" value="ECO:0000266"/>
    <property type="project" value="RGD"/>
</dbReference>
<dbReference type="GO" id="GO:0031490">
    <property type="term" value="F:chromatin DNA binding"/>
    <property type="evidence" value="ECO:0000318"/>
    <property type="project" value="GO_Central"/>
</dbReference>
<dbReference type="GO" id="GO:0046982">
    <property type="term" value="F:protein heterodimerization activity"/>
    <property type="evidence" value="ECO:0007669"/>
    <property type="project" value="InterPro"/>
</dbReference>
<dbReference type="GO" id="GO:0006338">
    <property type="term" value="P:chromatin remodeling"/>
    <property type="evidence" value="ECO:0000266"/>
    <property type="project" value="RGD"/>
</dbReference>
<dbReference type="GO" id="GO:0006974">
    <property type="term" value="P:DNA damage response"/>
    <property type="evidence" value="ECO:0000318"/>
    <property type="project" value="GO_Central"/>
</dbReference>
<dbReference type="GO" id="GO:0006261">
    <property type="term" value="P:DNA-templated DNA replication"/>
    <property type="evidence" value="ECO:0000266"/>
    <property type="project" value="RGD"/>
</dbReference>
<dbReference type="GO" id="GO:0031507">
    <property type="term" value="P:heterochromatin formation"/>
    <property type="evidence" value="ECO:0000318"/>
    <property type="project" value="GO_Central"/>
</dbReference>
<dbReference type="GO" id="GO:0006272">
    <property type="term" value="P:leading strand elongation"/>
    <property type="evidence" value="ECO:0000318"/>
    <property type="project" value="GO_Central"/>
</dbReference>
<dbReference type="GO" id="GO:0000122">
    <property type="term" value="P:negative regulation of transcription by RNA polymerase II"/>
    <property type="evidence" value="ECO:0000266"/>
    <property type="project" value="RGD"/>
</dbReference>
<dbReference type="GO" id="GO:0006334">
    <property type="term" value="P:nucleosome assembly"/>
    <property type="evidence" value="ECO:0000266"/>
    <property type="project" value="RGD"/>
</dbReference>
<dbReference type="GO" id="GO:0006275">
    <property type="term" value="P:regulation of DNA replication"/>
    <property type="evidence" value="ECO:0000266"/>
    <property type="project" value="RGD"/>
</dbReference>
<dbReference type="CDD" id="cd22928">
    <property type="entry name" value="HFD_POLE3_DPB4"/>
    <property type="match status" value="1"/>
</dbReference>
<dbReference type="FunFam" id="1.10.20.10:FF:000041">
    <property type="entry name" value="DNA polymerase epsilon subunit 3"/>
    <property type="match status" value="1"/>
</dbReference>
<dbReference type="Gene3D" id="1.10.20.10">
    <property type="entry name" value="Histone, subunit A"/>
    <property type="match status" value="1"/>
</dbReference>
<dbReference type="InterPro" id="IPR003958">
    <property type="entry name" value="CBFA_NFYB_domain"/>
</dbReference>
<dbReference type="InterPro" id="IPR051377">
    <property type="entry name" value="DNA_Pol-Epsilon_Subunit"/>
</dbReference>
<dbReference type="InterPro" id="IPR009072">
    <property type="entry name" value="Histone-fold"/>
</dbReference>
<dbReference type="PANTHER" id="PTHR46172">
    <property type="entry name" value="DNA POLYMERASE EPSILON SUBUNIT 3"/>
    <property type="match status" value="1"/>
</dbReference>
<dbReference type="PANTHER" id="PTHR46172:SF1">
    <property type="entry name" value="DNA POLYMERASE EPSILON SUBUNIT 3"/>
    <property type="match status" value="1"/>
</dbReference>
<dbReference type="Pfam" id="PF00808">
    <property type="entry name" value="CBFD_NFYB_HMF"/>
    <property type="match status" value="1"/>
</dbReference>
<dbReference type="SUPFAM" id="SSF47113">
    <property type="entry name" value="Histone-fold"/>
    <property type="match status" value="1"/>
</dbReference>
<proteinExistence type="evidence at protein level"/>
<comment type="function">
    <text evidence="1 2">Accessory component of the DNA polymerase epsilon complex (By similarity). Participates in DNA repair and in chromosomal DNA replication (By similarity). Forms a complex with CHRAC1 and binds naked DNA, which is then incorporated into chromatin, aided by the nucleosome-remodeling activity of ISWI/SNF2H and ACF1 (By similarity). Does not enhance nucleosome sliding activity of the ACF-5 ISWI chromatin remodeling complex (By similarity).</text>
</comment>
<comment type="subunit">
    <text evidence="2">Component of the DNA polymerase epsilon complex consisting of four subunits: the catalytic subunit POLE and the accessory subunits POLE2, POLE3 and POLE4. Interaction with POLE4 is a prerequisite for further binding with POLE and POLE2. Heterodimer with CHRAC1; binds to DNA (By similarity). Component of the CHRAC ISWI chromatin remodeling complex at least composed of SMARCA5/SNF2H, BAZ1A/ACF1, CHRAC1 and POLE3; the complex preferentially binds DNA through the CHRAC1-POLE3 heterodimer and possesses ATP-dependent nucleosome-remodeling activity (By similarity). Within the complex, the heterodimer with CHRAC1 interacts with SMARCA5/SNF2H; the interaction is direct and enhances nucleosome sliding activity by the SMARCA5/SNF2H and BAZ1A/ACF1 interaction (By similarity). Within the complex, the heterodimer with CHRAC1 interacts with BAZ1A/ACF1; the interactions are direct (By similarity).</text>
</comment>
<comment type="subcellular location">
    <subcellularLocation>
        <location evidence="5">Nucleus</location>
    </subcellularLocation>
</comment>
<name>DPOE3_RAT</name>
<feature type="initiator methionine" description="Removed" evidence="2">
    <location>
        <position position="1"/>
    </location>
</feature>
<feature type="chain" id="PRO_0000208344" description="DNA polymerase epsilon subunit 3">
    <location>
        <begin position="2"/>
        <end position="145"/>
    </location>
</feature>
<feature type="region of interest" description="Disordered" evidence="4">
    <location>
        <begin position="93"/>
        <end position="145"/>
    </location>
</feature>
<feature type="coiled-coil region" evidence="3">
    <location>
        <begin position="85"/>
        <end position="144"/>
    </location>
</feature>
<feature type="compositionally biased region" description="Basic and acidic residues" evidence="4">
    <location>
        <begin position="93"/>
        <end position="123"/>
    </location>
</feature>
<feature type="compositionally biased region" description="Acidic residues" evidence="4">
    <location>
        <begin position="124"/>
        <end position="145"/>
    </location>
</feature>
<feature type="modified residue" description="N-acetylalanine" evidence="2">
    <location>
        <position position="2"/>
    </location>
</feature>
<feature type="modified residue" description="Phosphothreonine" evidence="2">
    <location>
        <position position="83"/>
    </location>
</feature>
<feature type="modified residue" description="Phosphoserine" evidence="6">
    <location>
        <position position="121"/>
    </location>
</feature>
<gene>
    <name type="primary">Pole3</name>
</gene>
<organism>
    <name type="scientific">Rattus norvegicus</name>
    <name type="common">Rat</name>
    <dbReference type="NCBI Taxonomy" id="10116"/>
    <lineage>
        <taxon>Eukaryota</taxon>
        <taxon>Metazoa</taxon>
        <taxon>Chordata</taxon>
        <taxon>Craniata</taxon>
        <taxon>Vertebrata</taxon>
        <taxon>Euteleostomi</taxon>
        <taxon>Mammalia</taxon>
        <taxon>Eutheria</taxon>
        <taxon>Euarchontoglires</taxon>
        <taxon>Glires</taxon>
        <taxon>Rodentia</taxon>
        <taxon>Myomorpha</taxon>
        <taxon>Muroidea</taxon>
        <taxon>Muridae</taxon>
        <taxon>Murinae</taxon>
        <taxon>Rattus</taxon>
    </lineage>
</organism>
<accession>Q642A5</accession>